<reference key="1">
    <citation type="journal article" date="2008" name="Proc. Natl. Acad. Sci. U.S.A.">
        <title>Nitrogen fixation island and rhizosphere competence traits in the genome of root-associated Pseudomonas stutzeri A1501.</title>
        <authorList>
            <person name="Yan Y."/>
            <person name="Yang J."/>
            <person name="Dou Y."/>
            <person name="Chen M."/>
            <person name="Ping S."/>
            <person name="Peng J."/>
            <person name="Lu W."/>
            <person name="Zhang W."/>
            <person name="Yao Z."/>
            <person name="Li H."/>
            <person name="Liu W."/>
            <person name="He S."/>
            <person name="Geng L."/>
            <person name="Zhang X."/>
            <person name="Yang F."/>
            <person name="Yu H."/>
            <person name="Zhan Y."/>
            <person name="Li D."/>
            <person name="Lin Z."/>
            <person name="Wang Y."/>
            <person name="Elmerich C."/>
            <person name="Lin M."/>
            <person name="Jin Q."/>
        </authorList>
    </citation>
    <scope>NUCLEOTIDE SEQUENCE [LARGE SCALE GENOMIC DNA]</scope>
    <source>
        <strain>A1501</strain>
    </source>
</reference>
<organism>
    <name type="scientific">Stutzerimonas stutzeri (strain A1501)</name>
    <name type="common">Pseudomonas stutzeri</name>
    <dbReference type="NCBI Taxonomy" id="379731"/>
    <lineage>
        <taxon>Bacteria</taxon>
        <taxon>Pseudomonadati</taxon>
        <taxon>Pseudomonadota</taxon>
        <taxon>Gammaproteobacteria</taxon>
        <taxon>Pseudomonadales</taxon>
        <taxon>Pseudomonadaceae</taxon>
        <taxon>Stutzerimonas</taxon>
    </lineage>
</organism>
<accession>A4VHT4</accession>
<protein>
    <recommendedName>
        <fullName evidence="1">6,7-dimethyl-8-ribityllumazine synthase</fullName>
        <shortName evidence="1">DMRL synthase</shortName>
        <shortName evidence="1">LS</shortName>
        <shortName evidence="1">Lumazine synthase</shortName>
        <ecNumber evidence="1">2.5.1.78</ecNumber>
    </recommendedName>
</protein>
<feature type="chain" id="PRO_1000040492" description="6,7-dimethyl-8-ribityllumazine synthase">
    <location>
        <begin position="1"/>
        <end position="158"/>
    </location>
</feature>
<feature type="active site" description="Proton donor" evidence="1">
    <location>
        <position position="90"/>
    </location>
</feature>
<feature type="binding site" evidence="1">
    <location>
        <position position="24"/>
    </location>
    <ligand>
        <name>5-amino-6-(D-ribitylamino)uracil</name>
        <dbReference type="ChEBI" id="CHEBI:15934"/>
    </ligand>
</feature>
<feature type="binding site" evidence="1">
    <location>
        <begin position="58"/>
        <end position="60"/>
    </location>
    <ligand>
        <name>5-amino-6-(D-ribitylamino)uracil</name>
        <dbReference type="ChEBI" id="CHEBI:15934"/>
    </ligand>
</feature>
<feature type="binding site" evidence="1">
    <location>
        <begin position="82"/>
        <end position="84"/>
    </location>
    <ligand>
        <name>5-amino-6-(D-ribitylamino)uracil</name>
        <dbReference type="ChEBI" id="CHEBI:15934"/>
    </ligand>
</feature>
<feature type="binding site" evidence="1">
    <location>
        <begin position="87"/>
        <end position="88"/>
    </location>
    <ligand>
        <name>(2S)-2-hydroxy-3-oxobutyl phosphate</name>
        <dbReference type="ChEBI" id="CHEBI:58830"/>
    </ligand>
</feature>
<feature type="binding site" evidence="1">
    <location>
        <position position="115"/>
    </location>
    <ligand>
        <name>5-amino-6-(D-ribitylamino)uracil</name>
        <dbReference type="ChEBI" id="CHEBI:15934"/>
    </ligand>
</feature>
<feature type="binding site" evidence="1">
    <location>
        <position position="129"/>
    </location>
    <ligand>
        <name>(2S)-2-hydroxy-3-oxobutyl phosphate</name>
        <dbReference type="ChEBI" id="CHEBI:58830"/>
    </ligand>
</feature>
<keyword id="KW-1185">Reference proteome</keyword>
<keyword id="KW-0686">Riboflavin biosynthesis</keyword>
<keyword id="KW-0808">Transferase</keyword>
<proteinExistence type="inferred from homology"/>
<evidence type="ECO:0000255" key="1">
    <source>
        <dbReference type="HAMAP-Rule" id="MF_00178"/>
    </source>
</evidence>
<sequence>MPLKTIEGTFIAPQGKYALVVGRFNSFVVESLVSGAVDALVRHGVSENDITIIRAPGAFEIPLVAQKVAQQGEYDAIIALGAVIRGGTPHFEYVAGECTKGLAQVSMEFGVPVAFGVLTVDSIEQAIERSGTKAGNKGAEAALSALEMVSLLSQLEAK</sequence>
<name>RISB_STUS1</name>
<comment type="function">
    <text evidence="1">Catalyzes the formation of 6,7-dimethyl-8-ribityllumazine by condensation of 5-amino-6-(D-ribitylamino)uracil with 3,4-dihydroxy-2-butanone 4-phosphate. This is the penultimate step in the biosynthesis of riboflavin.</text>
</comment>
<comment type="catalytic activity">
    <reaction evidence="1">
        <text>(2S)-2-hydroxy-3-oxobutyl phosphate + 5-amino-6-(D-ribitylamino)uracil = 6,7-dimethyl-8-(1-D-ribityl)lumazine + phosphate + 2 H2O + H(+)</text>
        <dbReference type="Rhea" id="RHEA:26152"/>
        <dbReference type="ChEBI" id="CHEBI:15377"/>
        <dbReference type="ChEBI" id="CHEBI:15378"/>
        <dbReference type="ChEBI" id="CHEBI:15934"/>
        <dbReference type="ChEBI" id="CHEBI:43474"/>
        <dbReference type="ChEBI" id="CHEBI:58201"/>
        <dbReference type="ChEBI" id="CHEBI:58830"/>
        <dbReference type="EC" id="2.5.1.78"/>
    </reaction>
</comment>
<comment type="pathway">
    <text evidence="1">Cofactor biosynthesis; riboflavin biosynthesis; riboflavin from 2-hydroxy-3-oxobutyl phosphate and 5-amino-6-(D-ribitylamino)uracil: step 1/2.</text>
</comment>
<comment type="subunit">
    <text evidence="1">Forms an icosahedral capsid composed of 60 subunits, arranged as a dodecamer of pentamers.</text>
</comment>
<comment type="similarity">
    <text evidence="1">Belongs to the DMRL synthase family.</text>
</comment>
<dbReference type="EC" id="2.5.1.78" evidence="1"/>
<dbReference type="EMBL" id="CP000304">
    <property type="protein sequence ID" value="ABP78535.1"/>
    <property type="molecule type" value="Genomic_DNA"/>
</dbReference>
<dbReference type="SMR" id="A4VHT4"/>
<dbReference type="KEGG" id="psa:PST_0838"/>
<dbReference type="eggNOG" id="COG0054">
    <property type="taxonomic scope" value="Bacteria"/>
</dbReference>
<dbReference type="HOGENOM" id="CLU_089358_1_1_6"/>
<dbReference type="UniPathway" id="UPA00275">
    <property type="reaction ID" value="UER00404"/>
</dbReference>
<dbReference type="Proteomes" id="UP000000233">
    <property type="component" value="Chromosome"/>
</dbReference>
<dbReference type="GO" id="GO:0005829">
    <property type="term" value="C:cytosol"/>
    <property type="evidence" value="ECO:0007669"/>
    <property type="project" value="TreeGrafter"/>
</dbReference>
<dbReference type="GO" id="GO:0009349">
    <property type="term" value="C:riboflavin synthase complex"/>
    <property type="evidence" value="ECO:0007669"/>
    <property type="project" value="InterPro"/>
</dbReference>
<dbReference type="GO" id="GO:0000906">
    <property type="term" value="F:6,7-dimethyl-8-ribityllumazine synthase activity"/>
    <property type="evidence" value="ECO:0007669"/>
    <property type="project" value="UniProtKB-UniRule"/>
</dbReference>
<dbReference type="GO" id="GO:0009231">
    <property type="term" value="P:riboflavin biosynthetic process"/>
    <property type="evidence" value="ECO:0007669"/>
    <property type="project" value="UniProtKB-UniRule"/>
</dbReference>
<dbReference type="CDD" id="cd09209">
    <property type="entry name" value="Lumazine_synthase-I"/>
    <property type="match status" value="1"/>
</dbReference>
<dbReference type="FunFam" id="3.40.50.960:FF:000001">
    <property type="entry name" value="6,7-dimethyl-8-ribityllumazine synthase"/>
    <property type="match status" value="1"/>
</dbReference>
<dbReference type="Gene3D" id="3.40.50.960">
    <property type="entry name" value="Lumazine/riboflavin synthase"/>
    <property type="match status" value="1"/>
</dbReference>
<dbReference type="HAMAP" id="MF_00178">
    <property type="entry name" value="Lumazine_synth"/>
    <property type="match status" value="1"/>
</dbReference>
<dbReference type="InterPro" id="IPR034964">
    <property type="entry name" value="LS"/>
</dbReference>
<dbReference type="InterPro" id="IPR002180">
    <property type="entry name" value="LS/RS"/>
</dbReference>
<dbReference type="InterPro" id="IPR036467">
    <property type="entry name" value="LS/RS_sf"/>
</dbReference>
<dbReference type="NCBIfam" id="TIGR00114">
    <property type="entry name" value="lumazine-synth"/>
    <property type="match status" value="1"/>
</dbReference>
<dbReference type="NCBIfam" id="NF000812">
    <property type="entry name" value="PRK00061.1-4"/>
    <property type="match status" value="1"/>
</dbReference>
<dbReference type="PANTHER" id="PTHR21058:SF0">
    <property type="entry name" value="6,7-DIMETHYL-8-RIBITYLLUMAZINE SYNTHASE"/>
    <property type="match status" value="1"/>
</dbReference>
<dbReference type="PANTHER" id="PTHR21058">
    <property type="entry name" value="6,7-DIMETHYL-8-RIBITYLLUMAZINE SYNTHASE DMRL SYNTHASE LUMAZINE SYNTHASE"/>
    <property type="match status" value="1"/>
</dbReference>
<dbReference type="Pfam" id="PF00885">
    <property type="entry name" value="DMRL_synthase"/>
    <property type="match status" value="1"/>
</dbReference>
<dbReference type="SUPFAM" id="SSF52121">
    <property type="entry name" value="Lumazine synthase"/>
    <property type="match status" value="1"/>
</dbReference>
<gene>
    <name evidence="1" type="primary">ribH</name>
    <name type="ordered locus">PST_0838</name>
</gene>